<organism>
    <name type="scientific">Mus musculus</name>
    <name type="common">Mouse</name>
    <dbReference type="NCBI Taxonomy" id="10090"/>
    <lineage>
        <taxon>Eukaryota</taxon>
        <taxon>Metazoa</taxon>
        <taxon>Chordata</taxon>
        <taxon>Craniata</taxon>
        <taxon>Vertebrata</taxon>
        <taxon>Euteleostomi</taxon>
        <taxon>Mammalia</taxon>
        <taxon>Eutheria</taxon>
        <taxon>Euarchontoglires</taxon>
        <taxon>Glires</taxon>
        <taxon>Rodentia</taxon>
        <taxon>Myomorpha</taxon>
        <taxon>Muroidea</taxon>
        <taxon>Muridae</taxon>
        <taxon>Murinae</taxon>
        <taxon>Mus</taxon>
        <taxon>Mus</taxon>
    </lineage>
</organism>
<name>RAI3_MOUSE</name>
<protein>
    <recommendedName>
        <fullName>Retinoic acid-induced protein 3</fullName>
    </recommendedName>
    <alternativeName>
        <fullName>G-protein coupled receptor family C group 5 member A</fullName>
    </alternativeName>
    <alternativeName>
        <fullName>Retinoic acid-induced gene 1 protein</fullName>
        <shortName>RAIG-1</shortName>
    </alternativeName>
</protein>
<comment type="function">
    <text evidence="5 6">Orphan receptor. Could be involved in modulating differentiation and maintaining homeostasis of epithelial cells. This retinoic acid-inducible GPCR provides evidence for a possible interaction between retinoid and G-protein signaling pathways. Functions as a negative modulator of EGFR signaling (PubMed:25744720). Acts as a lung tumor suppressor (PubMed:18000218).</text>
</comment>
<comment type="subunit">
    <text evidence="6">Interacts (via its transmembrane domain) with EGFR (PubMed:25744720).</text>
</comment>
<comment type="subcellular location">
    <subcellularLocation>
        <location evidence="5">Cell membrane</location>
        <topology evidence="2">Multi-pass membrane protein</topology>
    </subcellularLocation>
</comment>
<comment type="tissue specificity">
    <text evidence="5">Expressed predominantly in normal fetal and adult lung. Almost undetectable or expressed at very low levels in other tissues.</text>
</comment>
<comment type="induction">
    <text evidence="4">By all-trans retinoic acid (ATRA).</text>
</comment>
<comment type="PTM">
    <text evidence="1">Phosphorylated in two conserved double-tyrosine motifs, Tyr 318/Tyr-321 and Tyr-346/Tyr-349 by EGFR. Tyr-318 and Tyr-321 are the preferred residues responsible for EGFR-mediated GPRC5A phosphorylation.</text>
</comment>
<comment type="disruption phenotype">
    <text evidence="5">Homozygous deficient mice developed more lung tumors during 1-2 years than heterozygous or wild-type mice.</text>
</comment>
<comment type="similarity">
    <text evidence="7">Belongs to the G-protein coupled receptor 3 family.</text>
</comment>
<comment type="sequence caution" evidence="7">
    <conflict type="erroneous initiation">
        <sequence resource="EMBL-CDS" id="AAL87526"/>
    </conflict>
    <text>Extended N-terminus.</text>
</comment>
<feature type="chain" id="PRO_0000206896" description="Retinoic acid-induced protein 3">
    <location>
        <begin position="1"/>
        <end position="356"/>
    </location>
</feature>
<feature type="topological domain" description="Extracellular" evidence="7">
    <location>
        <begin position="1"/>
        <end position="35"/>
    </location>
</feature>
<feature type="transmembrane region" description="Helical; Name=1" evidence="2">
    <location>
        <begin position="36"/>
        <end position="56"/>
    </location>
</feature>
<feature type="topological domain" description="Cytoplasmic" evidence="7">
    <location>
        <begin position="57"/>
        <end position="68"/>
    </location>
</feature>
<feature type="transmembrane region" description="Helical; Name=2" evidence="2">
    <location>
        <begin position="69"/>
        <end position="89"/>
    </location>
</feature>
<feature type="topological domain" description="Extracellular" evidence="7">
    <location>
        <begin position="90"/>
        <end position="101"/>
    </location>
</feature>
<feature type="transmembrane region" description="Helical; Name=3" evidence="2">
    <location>
        <begin position="102"/>
        <end position="122"/>
    </location>
</feature>
<feature type="topological domain" description="Cytoplasmic" evidence="7">
    <location>
        <begin position="123"/>
        <end position="131"/>
    </location>
</feature>
<feature type="transmembrane region" description="Helical; Name=4" evidence="2">
    <location>
        <begin position="132"/>
        <end position="152"/>
    </location>
</feature>
<feature type="topological domain" description="Extracellular" evidence="7">
    <location>
        <begin position="153"/>
        <end position="178"/>
    </location>
</feature>
<feature type="transmembrane region" description="Helical; Name=5" evidence="2">
    <location>
        <begin position="179"/>
        <end position="199"/>
    </location>
</feature>
<feature type="topological domain" description="Cytoplasmic" evidence="7">
    <location>
        <begin position="200"/>
        <end position="214"/>
    </location>
</feature>
<feature type="transmembrane region" description="Helical; Name=6" evidence="2">
    <location>
        <begin position="215"/>
        <end position="235"/>
    </location>
</feature>
<feature type="topological domain" description="Extracellular" evidence="7">
    <location>
        <begin position="236"/>
        <end position="244"/>
    </location>
</feature>
<feature type="transmembrane region" description="Helical; Name=7" evidence="2">
    <location>
        <begin position="245"/>
        <end position="265"/>
    </location>
</feature>
<feature type="topological domain" description="Cytoplasmic" evidence="7">
    <location>
        <begin position="266"/>
        <end position="356"/>
    </location>
</feature>
<feature type="region of interest" description="Disordered" evidence="3">
    <location>
        <begin position="336"/>
        <end position="356"/>
    </location>
</feature>
<feature type="modified residue" description="Phosphoserine" evidence="1">
    <location>
        <position position="303"/>
    </location>
</feature>
<feature type="modified residue" description="Phosphotyrosine" evidence="1">
    <location>
        <position position="318"/>
    </location>
</feature>
<feature type="modified residue" description="Phosphotyrosine" evidence="1">
    <location>
        <position position="321"/>
    </location>
</feature>
<feature type="modified residue" description="Phosphoserine" evidence="1">
    <location>
        <position position="344"/>
    </location>
</feature>
<feature type="modified residue" description="Phosphotyrosine" evidence="1">
    <location>
        <position position="346"/>
    </location>
</feature>
<feature type="modified residue" description="Phosphotyrosine" evidence="8">
    <location>
        <position position="349"/>
    </location>
</feature>
<feature type="glycosylation site" description="N-linked (GlcNAc...) asparagine" evidence="2">
    <location>
        <position position="160"/>
    </location>
</feature>
<feature type="sequence conflict" description="In Ref. 1; AAL87526." evidence="7" ref="1">
    <original>T</original>
    <variation>A</variation>
    <location>
        <position position="196"/>
    </location>
</feature>
<keyword id="KW-1003">Cell membrane</keyword>
<keyword id="KW-0297">G-protein coupled receptor</keyword>
<keyword id="KW-0325">Glycoprotein</keyword>
<keyword id="KW-0472">Membrane</keyword>
<keyword id="KW-0597">Phosphoprotein</keyword>
<keyword id="KW-0675">Receptor</keyword>
<keyword id="KW-1185">Reference proteome</keyword>
<keyword id="KW-0807">Transducer</keyword>
<keyword id="KW-0812">Transmembrane</keyword>
<keyword id="KW-1133">Transmembrane helix</keyword>
<keyword id="KW-0043">Tumor suppressor</keyword>
<sequence>MTTPTTAPSGCRSDLDSRYHRLCDLAEGWGIALETLAAVGAVATVACMFALVFLICKVQDSNKRKMLPAQFLFLLGVLGVFGLTFAFIIKLDGATGPTRFFLFGVLFAICFSCLLAHAFNLIKLVRGRKPLSWLVILSLAVGFSLVQDVIAIEYLVLTMNRTNVNVFSELPAPRRNEDFVMLLIYVLVLMVLTFFTSFLVFCGSFSGWKRHGFHICFTSFLSIAIWVAWIVLLLIPDIDRKWDDTILSTALVANGWVFLAFYILPEFRQLPRQRSPTDYPVEDAFCKPQLMKQSYGVENRAYSQEEITQGLEMGDTLYAPYSTHFQLQNHQKDFSIPRAQAPASPYNDYEGRKGDS</sequence>
<reference key="1">
    <citation type="journal article" date="2004" name="Genomics">
        <title>Characterization of the murine orphan G-protein-coupled receptor gene Rai3 and its regulation by retinoic acid.</title>
        <authorList>
            <person name="Tao Q."/>
            <person name="Cheng Y."/>
            <person name="Clifford J."/>
            <person name="Lotan R."/>
        </authorList>
    </citation>
    <scope>NUCLEOTIDE SEQUENCE [GENOMIC DNA]</scope>
    <source>
        <strain>129/Sv</strain>
        <tissue>Embryonic stem cell</tissue>
    </source>
</reference>
<reference key="2">
    <citation type="journal article" date="2004" name="Genome Res.">
        <title>The status, quality, and expansion of the NIH full-length cDNA project: the Mammalian Gene Collection (MGC).</title>
        <authorList>
            <consortium name="The MGC Project Team"/>
        </authorList>
    </citation>
    <scope>NUCLEOTIDE SEQUENCE [LARGE SCALE MRNA]</scope>
    <source>
        <strain>FVB/N</strain>
        <tissue>Colon</tissue>
    </source>
</reference>
<reference key="3">
    <citation type="journal article" date="2005" name="Nat. Biotechnol.">
        <title>Immunoaffinity profiling of tyrosine phosphorylation in cancer cells.</title>
        <authorList>
            <person name="Rush J."/>
            <person name="Moritz A."/>
            <person name="Lee K.A."/>
            <person name="Guo A."/>
            <person name="Goss V.L."/>
            <person name="Spek E.J."/>
            <person name="Zhang H."/>
            <person name="Zha X.-M."/>
            <person name="Polakiewicz R.D."/>
            <person name="Comb M.J."/>
        </authorList>
    </citation>
    <scope>PHOSPHORYLATION [LARGE SCALE ANALYSIS] AT TYR-349</scope>
    <scope>IDENTIFICATION BY MASS SPECTROMETRY [LARGE SCALE ANALYSIS]</scope>
</reference>
<reference key="4">
    <citation type="journal article" date="2007" name="J. Natl. Cancer Inst.">
        <title>Identification of the retinoic acid-inducible Gprc5a as a new lung tumor suppressor gene.</title>
        <authorList>
            <person name="Tao Q."/>
            <person name="Fujimoto J."/>
            <person name="Men T."/>
            <person name="Ye X."/>
            <person name="Deng J."/>
            <person name="Lacroix L."/>
            <person name="Clifford J.L."/>
            <person name="Mao L."/>
            <person name="Van Pelt C.S."/>
            <person name="Lee J.J."/>
            <person name="Lotan D."/>
            <person name="Lotan R."/>
        </authorList>
    </citation>
    <scope>DISRUPTION PHENOTYPE</scope>
    <scope>TISSUE SPECIFICITY</scope>
    <scope>SUBCELLULAR LOCATION</scope>
    <scope>FUNCTION</scope>
</reference>
<reference key="5">
    <citation type="journal article" date="2010" name="Cell">
        <title>A tissue-specific atlas of mouse protein phosphorylation and expression.</title>
        <authorList>
            <person name="Huttlin E.L."/>
            <person name="Jedrychowski M.P."/>
            <person name="Elias J.E."/>
            <person name="Goswami T."/>
            <person name="Rad R."/>
            <person name="Beausoleil S.A."/>
            <person name="Villen J."/>
            <person name="Haas W."/>
            <person name="Sowa M.E."/>
            <person name="Gygi S.P."/>
        </authorList>
    </citation>
    <scope>IDENTIFICATION BY MASS SPECTROMETRY [LARGE SCALE ANALYSIS]</scope>
    <source>
        <tissue>Lung</tissue>
    </source>
</reference>
<reference key="6">
    <citation type="journal article" date="2015" name="Cancer Res.">
        <title>Lung tumor suppressor GPRC5A binds EGFR and restrains its effector signaling.</title>
        <authorList>
            <person name="Zhong S."/>
            <person name="Yin H."/>
            <person name="Liao Y."/>
            <person name="Yao F."/>
            <person name="Li Q."/>
            <person name="Zhang J."/>
            <person name="Jiao H."/>
            <person name="Zhao Y."/>
            <person name="Xu D."/>
            <person name="Liu S."/>
            <person name="Song H."/>
            <person name="Gao Y."/>
            <person name="Liu J."/>
            <person name="Ma L."/>
            <person name="Pang Z."/>
            <person name="Yang R."/>
            <person name="Ding C."/>
            <person name="Sun B."/>
            <person name="Lin X."/>
            <person name="Ye X."/>
            <person name="Guo W."/>
            <person name="Han B."/>
            <person name="Zhou B.P."/>
            <person name="Chin Y.E."/>
            <person name="Deng J."/>
        </authorList>
    </citation>
    <scope>FUNCTION</scope>
    <scope>INTERACTION WITH EGFR</scope>
</reference>
<gene>
    <name type="primary">Gprc5a</name>
    <name type="synonym">Rai3</name>
    <name type="synonym">Raig1</name>
</gene>
<evidence type="ECO:0000250" key="1">
    <source>
        <dbReference type="UniProtKB" id="Q8NFJ5"/>
    </source>
</evidence>
<evidence type="ECO:0000255" key="2"/>
<evidence type="ECO:0000256" key="3">
    <source>
        <dbReference type="SAM" id="MobiDB-lite"/>
    </source>
</evidence>
<evidence type="ECO:0000269" key="4">
    <source>
    </source>
</evidence>
<evidence type="ECO:0000269" key="5">
    <source>
    </source>
</evidence>
<evidence type="ECO:0000269" key="6">
    <source>
    </source>
</evidence>
<evidence type="ECO:0000305" key="7"/>
<evidence type="ECO:0007744" key="8">
    <source>
    </source>
</evidence>
<dbReference type="EMBL" id="AH011528">
    <property type="protein sequence ID" value="AAL87526.1"/>
    <property type="status" value="ALT_INIT"/>
    <property type="molecule type" value="Genomic_DNA"/>
</dbReference>
<dbReference type="EMBL" id="BC034063">
    <property type="protein sequence ID" value="AAH34063.1"/>
    <property type="molecule type" value="mRNA"/>
</dbReference>
<dbReference type="EMBL" id="BC036173">
    <property type="protein sequence ID" value="AAH36173.1"/>
    <property type="molecule type" value="mRNA"/>
</dbReference>
<dbReference type="EMBL" id="BC039217">
    <property type="protein sequence ID" value="AAH39217.1"/>
    <property type="molecule type" value="mRNA"/>
</dbReference>
<dbReference type="CCDS" id="CCDS20644.1"/>
<dbReference type="SMR" id="Q8BHL4"/>
<dbReference type="FunCoup" id="Q8BHL4">
    <property type="interactions" value="113"/>
</dbReference>
<dbReference type="IntAct" id="Q8BHL4">
    <property type="interactions" value="3"/>
</dbReference>
<dbReference type="MINT" id="Q8BHL4"/>
<dbReference type="STRING" id="10090.ENSMUSP00000061062"/>
<dbReference type="GlyCosmos" id="Q8BHL4">
    <property type="glycosylation" value="1 site, No reported glycans"/>
</dbReference>
<dbReference type="GlyGen" id="Q8BHL4">
    <property type="glycosylation" value="2 sites, 1 O-linked glycan (1 site)"/>
</dbReference>
<dbReference type="iPTMnet" id="Q8BHL4"/>
<dbReference type="PhosphoSitePlus" id="Q8BHL4"/>
<dbReference type="PaxDb" id="10090-ENSMUSP00000061062"/>
<dbReference type="ProteomicsDB" id="254978"/>
<dbReference type="AGR" id="MGI:1891250"/>
<dbReference type="MGI" id="MGI:1891250">
    <property type="gene designation" value="Gprc5a"/>
</dbReference>
<dbReference type="eggNOG" id="ENOG502RRIY">
    <property type="taxonomic scope" value="Eukaryota"/>
</dbReference>
<dbReference type="InParanoid" id="Q8BHL4"/>
<dbReference type="PhylomeDB" id="Q8BHL4"/>
<dbReference type="ChiTaRS" id="Gprc5a">
    <property type="organism name" value="mouse"/>
</dbReference>
<dbReference type="PRO" id="PR:Q8BHL4"/>
<dbReference type="Proteomes" id="UP000000589">
    <property type="component" value="Unplaced"/>
</dbReference>
<dbReference type="RNAct" id="Q8BHL4">
    <property type="molecule type" value="protein"/>
</dbReference>
<dbReference type="GO" id="GO:0005886">
    <property type="term" value="C:plasma membrane"/>
    <property type="evidence" value="ECO:0000314"/>
    <property type="project" value="UniProtKB"/>
</dbReference>
<dbReference type="GO" id="GO:0004930">
    <property type="term" value="F:G protein-coupled receptor activity"/>
    <property type="evidence" value="ECO:0007669"/>
    <property type="project" value="UniProtKB-KW"/>
</dbReference>
<dbReference type="GO" id="GO:0007175">
    <property type="term" value="P:negative regulation of epidermal growth factor-activated receptor activity"/>
    <property type="evidence" value="ECO:0000315"/>
    <property type="project" value="UniProtKB"/>
</dbReference>
<dbReference type="CDD" id="cd15279">
    <property type="entry name" value="7tmC_RAIG1_4_GPRC5A_D"/>
    <property type="match status" value="1"/>
</dbReference>
<dbReference type="InterPro" id="IPR017978">
    <property type="entry name" value="GPCR_3_C"/>
</dbReference>
<dbReference type="InterPro" id="IPR051753">
    <property type="entry name" value="RA-inducible_GPCR3"/>
</dbReference>
<dbReference type="PANTHER" id="PTHR14511">
    <property type="entry name" value="G PROTEIN COUPLED RECEPTOR, CLASS C, GROUP 5"/>
    <property type="match status" value="1"/>
</dbReference>
<dbReference type="PANTHER" id="PTHR14511:SF7">
    <property type="entry name" value="RETINOIC ACID-INDUCED PROTEIN 3"/>
    <property type="match status" value="1"/>
</dbReference>
<dbReference type="Pfam" id="PF00003">
    <property type="entry name" value="7tm_3"/>
    <property type="match status" value="1"/>
</dbReference>
<proteinExistence type="evidence at protein level"/>
<accession>Q8BHL4</accession>
<accession>Q8K067</accession>
<accession>Q8K1G5</accession>